<sequence>MNIIPTCQVPKDLVSAFFQKHWGSPQMVISSGIYNCDELDGYGMLNDDNQIVGLITYIFEEDACEIISLDSVIENKGIGTALLEKAEEACRERNIKQIKLITTNDNIHALAFYQKRGYRLDRLFVNAVETARKMKPEIPLLADNKIPIRDELLLVKELQ</sequence>
<gene>
    <name type="primary">yxbD</name>
    <name type="synonym">yxaR</name>
    <name type="ordered locus">BSU39870</name>
    <name type="ORF">VE7E</name>
</gene>
<feature type="chain" id="PRO_0000050007" description="Uncharacterized protein YxbD">
    <location>
        <begin position="1"/>
        <end position="159"/>
    </location>
</feature>
<feature type="domain" description="N-acetyltransferase" evidence="1">
    <location>
        <begin position="1"/>
        <end position="139"/>
    </location>
</feature>
<feature type="sequence conflict" description="In Ref. 1; BAA21598." evidence="2" ref="1">
    <original>V</original>
    <variation>I</variation>
    <location>
        <position position="9"/>
    </location>
</feature>
<feature type="sequence conflict" description="In Ref. 1; BAA21598." evidence="2" ref="1">
    <original>E</original>
    <variation>V</variation>
    <location>
        <position position="61"/>
    </location>
</feature>
<dbReference type="EMBL" id="AB005554">
    <property type="protein sequence ID" value="BAA21598.1"/>
    <property type="molecule type" value="Genomic_DNA"/>
</dbReference>
<dbReference type="EMBL" id="AL009126">
    <property type="protein sequence ID" value="CAB16023.2"/>
    <property type="molecule type" value="Genomic_DNA"/>
</dbReference>
<dbReference type="PIR" id="H70072">
    <property type="entry name" value="H70072"/>
</dbReference>
<dbReference type="RefSeq" id="NP_391866.2">
    <property type="nucleotide sequence ID" value="NC_000964.3"/>
</dbReference>
<dbReference type="RefSeq" id="WP_010886643.1">
    <property type="nucleotide sequence ID" value="NZ_OZ025638.1"/>
</dbReference>
<dbReference type="SMR" id="P46328"/>
<dbReference type="FunCoup" id="P46328">
    <property type="interactions" value="8"/>
</dbReference>
<dbReference type="IntAct" id="P46328">
    <property type="interactions" value="1"/>
</dbReference>
<dbReference type="STRING" id="224308.BSU39870"/>
<dbReference type="PaxDb" id="224308-BSU39870"/>
<dbReference type="EnsemblBacteria" id="CAB16023">
    <property type="protein sequence ID" value="CAB16023"/>
    <property type="gene ID" value="BSU_39870"/>
</dbReference>
<dbReference type="GeneID" id="937655"/>
<dbReference type="KEGG" id="bsu:BSU39870"/>
<dbReference type="PATRIC" id="fig|224308.43.peg.4183"/>
<dbReference type="eggNOG" id="COG0456">
    <property type="taxonomic scope" value="Bacteria"/>
</dbReference>
<dbReference type="InParanoid" id="P46328"/>
<dbReference type="OrthoDB" id="7365228at2"/>
<dbReference type="PhylomeDB" id="P46328"/>
<dbReference type="BioCyc" id="BSUB:BSU39870-MONOMER"/>
<dbReference type="Proteomes" id="UP000001570">
    <property type="component" value="Chromosome"/>
</dbReference>
<dbReference type="GO" id="GO:0016747">
    <property type="term" value="F:acyltransferase activity, transferring groups other than amino-acyl groups"/>
    <property type="evidence" value="ECO:0007669"/>
    <property type="project" value="InterPro"/>
</dbReference>
<dbReference type="CDD" id="cd04301">
    <property type="entry name" value="NAT_SF"/>
    <property type="match status" value="1"/>
</dbReference>
<dbReference type="FunFam" id="3.40.630.30:FF:000082">
    <property type="entry name" value="Acetyltransferase, GNAT family"/>
    <property type="match status" value="1"/>
</dbReference>
<dbReference type="Gene3D" id="3.40.630.30">
    <property type="match status" value="1"/>
</dbReference>
<dbReference type="InterPro" id="IPR016181">
    <property type="entry name" value="Acyl_CoA_acyltransferase"/>
</dbReference>
<dbReference type="InterPro" id="IPR000182">
    <property type="entry name" value="GNAT_dom"/>
</dbReference>
<dbReference type="InterPro" id="IPR051556">
    <property type="entry name" value="N-term/lysine_N-AcTrnsfr"/>
</dbReference>
<dbReference type="PANTHER" id="PTHR42919:SF26">
    <property type="entry name" value="ACETYLTRANSFERASE"/>
    <property type="match status" value="1"/>
</dbReference>
<dbReference type="PANTHER" id="PTHR42919">
    <property type="entry name" value="N-ALPHA-ACETYLTRANSFERASE"/>
    <property type="match status" value="1"/>
</dbReference>
<dbReference type="Pfam" id="PF00583">
    <property type="entry name" value="Acetyltransf_1"/>
    <property type="match status" value="1"/>
</dbReference>
<dbReference type="SUPFAM" id="SSF55729">
    <property type="entry name" value="Acyl-CoA N-acyltransferases (Nat)"/>
    <property type="match status" value="1"/>
</dbReference>
<dbReference type="PROSITE" id="PS51186">
    <property type="entry name" value="GNAT"/>
    <property type="match status" value="1"/>
</dbReference>
<name>YXBD_BACSU</name>
<accession>P46328</accession>
<keyword id="KW-1185">Reference proteome</keyword>
<evidence type="ECO:0000255" key="1">
    <source>
        <dbReference type="PROSITE-ProRule" id="PRU00532"/>
    </source>
</evidence>
<evidence type="ECO:0000305" key="2"/>
<proteinExistence type="predicted"/>
<reference key="1">
    <citation type="journal article" date="1995" name="DNA Res.">
        <title>Cloning and sequencing of a 36-kb region of the Bacillus subtilis genome between the gnt and iol operons.</title>
        <authorList>
            <person name="Yoshida K."/>
            <person name="Seki S."/>
            <person name="Fujimura M."/>
            <person name="Miwa Y."/>
            <person name="Fujita Y."/>
        </authorList>
    </citation>
    <scope>NUCLEOTIDE SEQUENCE [GENOMIC DNA]</scope>
    <source>
        <strain>168 / BGSC1A1</strain>
    </source>
</reference>
<reference key="2">
    <citation type="journal article" date="1997" name="Nature">
        <title>The complete genome sequence of the Gram-positive bacterium Bacillus subtilis.</title>
        <authorList>
            <person name="Kunst F."/>
            <person name="Ogasawara N."/>
            <person name="Moszer I."/>
            <person name="Albertini A.M."/>
            <person name="Alloni G."/>
            <person name="Azevedo V."/>
            <person name="Bertero M.G."/>
            <person name="Bessieres P."/>
            <person name="Bolotin A."/>
            <person name="Borchert S."/>
            <person name="Borriss R."/>
            <person name="Boursier L."/>
            <person name="Brans A."/>
            <person name="Braun M."/>
            <person name="Brignell S.C."/>
            <person name="Bron S."/>
            <person name="Brouillet S."/>
            <person name="Bruschi C.V."/>
            <person name="Caldwell B."/>
            <person name="Capuano V."/>
            <person name="Carter N.M."/>
            <person name="Choi S.-K."/>
            <person name="Codani J.-J."/>
            <person name="Connerton I.F."/>
            <person name="Cummings N.J."/>
            <person name="Daniel R.A."/>
            <person name="Denizot F."/>
            <person name="Devine K.M."/>
            <person name="Duesterhoeft A."/>
            <person name="Ehrlich S.D."/>
            <person name="Emmerson P.T."/>
            <person name="Entian K.-D."/>
            <person name="Errington J."/>
            <person name="Fabret C."/>
            <person name="Ferrari E."/>
            <person name="Foulger D."/>
            <person name="Fritz C."/>
            <person name="Fujita M."/>
            <person name="Fujita Y."/>
            <person name="Fuma S."/>
            <person name="Galizzi A."/>
            <person name="Galleron N."/>
            <person name="Ghim S.-Y."/>
            <person name="Glaser P."/>
            <person name="Goffeau A."/>
            <person name="Golightly E.J."/>
            <person name="Grandi G."/>
            <person name="Guiseppi G."/>
            <person name="Guy B.J."/>
            <person name="Haga K."/>
            <person name="Haiech J."/>
            <person name="Harwood C.R."/>
            <person name="Henaut A."/>
            <person name="Hilbert H."/>
            <person name="Holsappel S."/>
            <person name="Hosono S."/>
            <person name="Hullo M.-F."/>
            <person name="Itaya M."/>
            <person name="Jones L.-M."/>
            <person name="Joris B."/>
            <person name="Karamata D."/>
            <person name="Kasahara Y."/>
            <person name="Klaerr-Blanchard M."/>
            <person name="Klein C."/>
            <person name="Kobayashi Y."/>
            <person name="Koetter P."/>
            <person name="Koningstein G."/>
            <person name="Krogh S."/>
            <person name="Kumano M."/>
            <person name="Kurita K."/>
            <person name="Lapidus A."/>
            <person name="Lardinois S."/>
            <person name="Lauber J."/>
            <person name="Lazarevic V."/>
            <person name="Lee S.-M."/>
            <person name="Levine A."/>
            <person name="Liu H."/>
            <person name="Masuda S."/>
            <person name="Mauel C."/>
            <person name="Medigue C."/>
            <person name="Medina N."/>
            <person name="Mellado R.P."/>
            <person name="Mizuno M."/>
            <person name="Moestl D."/>
            <person name="Nakai S."/>
            <person name="Noback M."/>
            <person name="Noone D."/>
            <person name="O'Reilly M."/>
            <person name="Ogawa K."/>
            <person name="Ogiwara A."/>
            <person name="Oudega B."/>
            <person name="Park S.-H."/>
            <person name="Parro V."/>
            <person name="Pohl T.M."/>
            <person name="Portetelle D."/>
            <person name="Porwollik S."/>
            <person name="Prescott A.M."/>
            <person name="Presecan E."/>
            <person name="Pujic P."/>
            <person name="Purnelle B."/>
            <person name="Rapoport G."/>
            <person name="Rey M."/>
            <person name="Reynolds S."/>
            <person name="Rieger M."/>
            <person name="Rivolta C."/>
            <person name="Rocha E."/>
            <person name="Roche B."/>
            <person name="Rose M."/>
            <person name="Sadaie Y."/>
            <person name="Sato T."/>
            <person name="Scanlan E."/>
            <person name="Schleich S."/>
            <person name="Schroeter R."/>
            <person name="Scoffone F."/>
            <person name="Sekiguchi J."/>
            <person name="Sekowska A."/>
            <person name="Seror S.J."/>
            <person name="Serror P."/>
            <person name="Shin B.-S."/>
            <person name="Soldo B."/>
            <person name="Sorokin A."/>
            <person name="Tacconi E."/>
            <person name="Takagi T."/>
            <person name="Takahashi H."/>
            <person name="Takemaru K."/>
            <person name="Takeuchi M."/>
            <person name="Tamakoshi A."/>
            <person name="Tanaka T."/>
            <person name="Terpstra P."/>
            <person name="Tognoni A."/>
            <person name="Tosato V."/>
            <person name="Uchiyama S."/>
            <person name="Vandenbol M."/>
            <person name="Vannier F."/>
            <person name="Vassarotti A."/>
            <person name="Viari A."/>
            <person name="Wambutt R."/>
            <person name="Wedler E."/>
            <person name="Wedler H."/>
            <person name="Weitzenegger T."/>
            <person name="Winters P."/>
            <person name="Wipat A."/>
            <person name="Yamamoto H."/>
            <person name="Yamane K."/>
            <person name="Yasumoto K."/>
            <person name="Yata K."/>
            <person name="Yoshida K."/>
            <person name="Yoshikawa H.-F."/>
            <person name="Zumstein E."/>
            <person name="Yoshikawa H."/>
            <person name="Danchin A."/>
        </authorList>
    </citation>
    <scope>NUCLEOTIDE SEQUENCE [LARGE SCALE GENOMIC DNA]</scope>
    <source>
        <strain>168</strain>
    </source>
</reference>
<reference key="3">
    <citation type="journal article" date="2009" name="Microbiology">
        <title>From a consortium sequence to a unified sequence: the Bacillus subtilis 168 reference genome a decade later.</title>
        <authorList>
            <person name="Barbe V."/>
            <person name="Cruveiller S."/>
            <person name="Kunst F."/>
            <person name="Lenoble P."/>
            <person name="Meurice G."/>
            <person name="Sekowska A."/>
            <person name="Vallenet D."/>
            <person name="Wang T."/>
            <person name="Moszer I."/>
            <person name="Medigue C."/>
            <person name="Danchin A."/>
        </authorList>
    </citation>
    <scope>SEQUENCE REVISION TO 9 AND 61</scope>
</reference>
<protein>
    <recommendedName>
        <fullName>Uncharacterized protein YxbD</fullName>
    </recommendedName>
</protein>
<organism>
    <name type="scientific">Bacillus subtilis (strain 168)</name>
    <dbReference type="NCBI Taxonomy" id="224308"/>
    <lineage>
        <taxon>Bacteria</taxon>
        <taxon>Bacillati</taxon>
        <taxon>Bacillota</taxon>
        <taxon>Bacilli</taxon>
        <taxon>Bacillales</taxon>
        <taxon>Bacillaceae</taxon>
        <taxon>Bacillus</taxon>
    </lineage>
</organism>